<comment type="function">
    <text evidence="1">Involved in peptide bond synthesis. Stimulates efficient translation and peptide-bond synthesis on native or reconstituted 70S ribosomes in vitro. Probably functions indirectly by altering the affinity of the ribosome for aminoacyl-tRNA, thus increasing their reactivity as acceptors for peptidyl transferase.</text>
</comment>
<comment type="pathway">
    <text evidence="1">Protein biosynthesis; polypeptide chain elongation.</text>
</comment>
<comment type="subcellular location">
    <subcellularLocation>
        <location evidence="1">Cytoplasm</location>
    </subcellularLocation>
</comment>
<comment type="similarity">
    <text evidence="1">Belongs to the elongation factor P family.</text>
</comment>
<gene>
    <name evidence="1" type="primary">efp</name>
    <name type="ordered locus">Clos_1624</name>
</gene>
<keyword id="KW-0963">Cytoplasm</keyword>
<keyword id="KW-0251">Elongation factor</keyword>
<keyword id="KW-0648">Protein biosynthesis</keyword>
<keyword id="KW-1185">Reference proteome</keyword>
<proteinExistence type="inferred from homology"/>
<dbReference type="EMBL" id="CP000853">
    <property type="protein sequence ID" value="ABW19167.1"/>
    <property type="molecule type" value="Genomic_DNA"/>
</dbReference>
<dbReference type="RefSeq" id="WP_012159479.1">
    <property type="nucleotide sequence ID" value="NC_009922.1"/>
</dbReference>
<dbReference type="SMR" id="A8MFK4"/>
<dbReference type="STRING" id="350688.Clos_1624"/>
<dbReference type="KEGG" id="aoe:Clos_1624"/>
<dbReference type="eggNOG" id="COG0231">
    <property type="taxonomic scope" value="Bacteria"/>
</dbReference>
<dbReference type="HOGENOM" id="CLU_074944_0_1_9"/>
<dbReference type="OrthoDB" id="9801844at2"/>
<dbReference type="UniPathway" id="UPA00345"/>
<dbReference type="Proteomes" id="UP000000269">
    <property type="component" value="Chromosome"/>
</dbReference>
<dbReference type="GO" id="GO:0005737">
    <property type="term" value="C:cytoplasm"/>
    <property type="evidence" value="ECO:0007669"/>
    <property type="project" value="UniProtKB-SubCell"/>
</dbReference>
<dbReference type="GO" id="GO:0003746">
    <property type="term" value="F:translation elongation factor activity"/>
    <property type="evidence" value="ECO:0007669"/>
    <property type="project" value="UniProtKB-UniRule"/>
</dbReference>
<dbReference type="GO" id="GO:0043043">
    <property type="term" value="P:peptide biosynthetic process"/>
    <property type="evidence" value="ECO:0007669"/>
    <property type="project" value="InterPro"/>
</dbReference>
<dbReference type="CDD" id="cd04470">
    <property type="entry name" value="S1_EF-P_repeat_1"/>
    <property type="match status" value="1"/>
</dbReference>
<dbReference type="CDD" id="cd05794">
    <property type="entry name" value="S1_EF-P_repeat_2"/>
    <property type="match status" value="1"/>
</dbReference>
<dbReference type="FunFam" id="2.30.30.30:FF:000003">
    <property type="entry name" value="Elongation factor P"/>
    <property type="match status" value="1"/>
</dbReference>
<dbReference type="FunFam" id="2.40.50.140:FF:000004">
    <property type="entry name" value="Elongation factor P"/>
    <property type="match status" value="1"/>
</dbReference>
<dbReference type="FunFam" id="2.40.50.140:FF:000009">
    <property type="entry name" value="Elongation factor P"/>
    <property type="match status" value="1"/>
</dbReference>
<dbReference type="Gene3D" id="2.30.30.30">
    <property type="match status" value="1"/>
</dbReference>
<dbReference type="Gene3D" id="2.40.50.140">
    <property type="entry name" value="Nucleic acid-binding proteins"/>
    <property type="match status" value="2"/>
</dbReference>
<dbReference type="HAMAP" id="MF_00141">
    <property type="entry name" value="EF_P"/>
    <property type="match status" value="1"/>
</dbReference>
<dbReference type="InterPro" id="IPR015365">
    <property type="entry name" value="Elong-fact-P_C"/>
</dbReference>
<dbReference type="InterPro" id="IPR012340">
    <property type="entry name" value="NA-bd_OB-fold"/>
</dbReference>
<dbReference type="InterPro" id="IPR014722">
    <property type="entry name" value="Rib_uL2_dom2"/>
</dbReference>
<dbReference type="InterPro" id="IPR020599">
    <property type="entry name" value="Transl_elong_fac_P/YeiP"/>
</dbReference>
<dbReference type="InterPro" id="IPR013185">
    <property type="entry name" value="Transl_elong_KOW-like"/>
</dbReference>
<dbReference type="InterPro" id="IPR001059">
    <property type="entry name" value="Transl_elong_P/YeiP_cen"/>
</dbReference>
<dbReference type="InterPro" id="IPR013852">
    <property type="entry name" value="Transl_elong_P/YeiP_CS"/>
</dbReference>
<dbReference type="InterPro" id="IPR011768">
    <property type="entry name" value="Transl_elongation_fac_P"/>
</dbReference>
<dbReference type="InterPro" id="IPR008991">
    <property type="entry name" value="Translation_prot_SH3-like_sf"/>
</dbReference>
<dbReference type="NCBIfam" id="TIGR00038">
    <property type="entry name" value="efp"/>
    <property type="match status" value="1"/>
</dbReference>
<dbReference type="NCBIfam" id="NF001810">
    <property type="entry name" value="PRK00529.1"/>
    <property type="match status" value="1"/>
</dbReference>
<dbReference type="PANTHER" id="PTHR30053">
    <property type="entry name" value="ELONGATION FACTOR P"/>
    <property type="match status" value="1"/>
</dbReference>
<dbReference type="PANTHER" id="PTHR30053:SF12">
    <property type="entry name" value="ELONGATION FACTOR P (EF-P) FAMILY PROTEIN"/>
    <property type="match status" value="1"/>
</dbReference>
<dbReference type="Pfam" id="PF01132">
    <property type="entry name" value="EFP"/>
    <property type="match status" value="1"/>
</dbReference>
<dbReference type="Pfam" id="PF08207">
    <property type="entry name" value="EFP_N"/>
    <property type="match status" value="1"/>
</dbReference>
<dbReference type="Pfam" id="PF09285">
    <property type="entry name" value="Elong-fact-P_C"/>
    <property type="match status" value="1"/>
</dbReference>
<dbReference type="PIRSF" id="PIRSF005901">
    <property type="entry name" value="EF-P"/>
    <property type="match status" value="1"/>
</dbReference>
<dbReference type="SMART" id="SM01185">
    <property type="entry name" value="EFP"/>
    <property type="match status" value="1"/>
</dbReference>
<dbReference type="SMART" id="SM00841">
    <property type="entry name" value="Elong-fact-P_C"/>
    <property type="match status" value="1"/>
</dbReference>
<dbReference type="SUPFAM" id="SSF50249">
    <property type="entry name" value="Nucleic acid-binding proteins"/>
    <property type="match status" value="2"/>
</dbReference>
<dbReference type="SUPFAM" id="SSF50104">
    <property type="entry name" value="Translation proteins SH3-like domain"/>
    <property type="match status" value="1"/>
</dbReference>
<dbReference type="PROSITE" id="PS01275">
    <property type="entry name" value="EFP"/>
    <property type="match status" value="1"/>
</dbReference>
<accession>A8MFK4</accession>
<reference key="1">
    <citation type="submission" date="2007-10" db="EMBL/GenBank/DDBJ databases">
        <title>Complete genome of Alkaliphilus oremlandii OhILAs.</title>
        <authorList>
            <person name="Copeland A."/>
            <person name="Lucas S."/>
            <person name="Lapidus A."/>
            <person name="Barry K."/>
            <person name="Detter J.C."/>
            <person name="Glavina del Rio T."/>
            <person name="Hammon N."/>
            <person name="Israni S."/>
            <person name="Dalin E."/>
            <person name="Tice H."/>
            <person name="Pitluck S."/>
            <person name="Chain P."/>
            <person name="Malfatti S."/>
            <person name="Shin M."/>
            <person name="Vergez L."/>
            <person name="Schmutz J."/>
            <person name="Larimer F."/>
            <person name="Land M."/>
            <person name="Hauser L."/>
            <person name="Kyrpides N."/>
            <person name="Mikhailova N."/>
            <person name="Stolz J.F."/>
            <person name="Dawson A."/>
            <person name="Fisher E."/>
            <person name="Crable B."/>
            <person name="Perera E."/>
            <person name="Lisak J."/>
            <person name="Ranganathan M."/>
            <person name="Basu P."/>
            <person name="Richardson P."/>
        </authorList>
    </citation>
    <scope>NUCLEOTIDE SEQUENCE [LARGE SCALE GENOMIC DNA]</scope>
    <source>
        <strain>OhILAs</strain>
    </source>
</reference>
<feature type="chain" id="PRO_1000057919" description="Elongation factor P">
    <location>
        <begin position="1"/>
        <end position="185"/>
    </location>
</feature>
<organism>
    <name type="scientific">Alkaliphilus oremlandii (strain OhILAs)</name>
    <name type="common">Clostridium oremlandii (strain OhILAs)</name>
    <dbReference type="NCBI Taxonomy" id="350688"/>
    <lineage>
        <taxon>Bacteria</taxon>
        <taxon>Bacillati</taxon>
        <taxon>Bacillota</taxon>
        <taxon>Clostridia</taxon>
        <taxon>Peptostreptococcales</taxon>
        <taxon>Natronincolaceae</taxon>
        <taxon>Alkaliphilus</taxon>
    </lineage>
</organism>
<name>EFP_ALKOO</name>
<evidence type="ECO:0000255" key="1">
    <source>
        <dbReference type="HAMAP-Rule" id="MF_00141"/>
    </source>
</evidence>
<sequence length="185" mass="21015">MISASDFRKGVTFEMNGEPYVVLDFQHVKPGKGAAFVRTKYKNLKNGGTREEAFNPSDKFPKAHIETKEMQYLYSDGELYYFMDNETFEQTPLTYEEVEDAIKFLKENDNATIKFYHGKPFQVDPPNFVELQITETEPGVKGDTASNVTKTATVETGAVIHVPLFVNEGDTVRIDTRTGEYMSRV</sequence>
<protein>
    <recommendedName>
        <fullName evidence="1">Elongation factor P</fullName>
        <shortName evidence="1">EF-P</shortName>
    </recommendedName>
</protein>